<organism>
    <name type="scientific">Hypnea musciformis</name>
    <name type="common">Red alga</name>
    <name type="synonym">Fucus musciformis</name>
    <dbReference type="NCBI Taxonomy" id="31429"/>
    <lineage>
        <taxon>Eukaryota</taxon>
        <taxon>Rhodophyta</taxon>
        <taxon>Florideophyceae</taxon>
        <taxon>Rhodymeniophycidae</taxon>
        <taxon>Gigartinales</taxon>
        <taxon>Hypneaceae</taxon>
        <taxon>Hypnea</taxon>
    </lineage>
</organism>
<evidence type="ECO:0000269" key="1">
    <source>
    </source>
</evidence>
<evidence type="ECO:0000305" key="2"/>
<evidence type="ECO:0000305" key="3">
    <source>
    </source>
</evidence>
<reference evidence="2" key="1">
    <citation type="journal article" date="2005" name="Protein Sci.">
        <title>HCA and HML isolated from the red marine algae Hypnea cervicornis and Hypnea musciformis define a novel lectin family.</title>
        <authorList>
            <person name="Nagano C.S."/>
            <person name="Debray H."/>
            <person name="Nascimento K.S."/>
            <person name="Pinto V.P.T."/>
            <person name="Cavada B.S."/>
            <person name="Saker-Sampaio S."/>
            <person name="Farias W.R.L."/>
            <person name="Sampaio A.H."/>
            <person name="Calvete J.J."/>
        </authorList>
    </citation>
    <scope>PROTEIN SEQUENCE</scope>
    <scope>PYROGLUTAMATE FORMATION AT GLN-1</scope>
    <scope>FUNCTION</scope>
    <scope>CLEAVAGE</scope>
    <scope>DISULFIDE BONDS</scope>
    <scope>MASS SPECTROMETRY</scope>
</reference>
<dbReference type="GO" id="GO:0030246">
    <property type="term" value="F:carbohydrate binding"/>
    <property type="evidence" value="ECO:0007669"/>
    <property type="project" value="UniProtKB-KW"/>
</dbReference>
<sequence>QKFCTLDIAPVCCQIVIGGGMYTAGNACMCEGFVSGVGRCENPKECPCTREAQIPSCCSSRWGLVSVTGKCACDCLGGTVAFPEPCPSPY</sequence>
<proteinExistence type="evidence at protein level"/>
<name>LEC1_HYPMC</name>
<comment type="function">
    <text evidence="1">Lectin with specificity for complex N-linked glycans and O-linked glycans. Has hemagglutinating activity towards rabbit erythrocytes.</text>
</comment>
<comment type="PTM">
    <text evidence="1">The N-terminus is blocked.</text>
</comment>
<comment type="PTM">
    <text evidence="1 2">Contains seven disulfide bonds.</text>
</comment>
<comment type="PTM">
    <text evidence="1">Proteolytically cleaved. Major mature form may consist of cleaved, disulfide-bonded N-terminal and C-terminal chains.</text>
</comment>
<comment type="mass spectrometry">
    <molecule>Lectin-1</molecule>
    <text>The measured mass is that of the native single chain.</text>
</comment>
<comment type="mass spectrometry">
    <molecule>Lectin-1</molecule>
    <text>The measured mass is that of the reduced and carbamidomethylated single chain.</text>
</comment>
<comment type="mass spectrometry">
    <molecule>Lectin-1 N-terminal subunit</molecule>
    <text>The measured mass is that of the reduced and carbamidomethylated N-terminal chain.</text>
</comment>
<comment type="mass spectrometry">
    <molecule>Lectin-1 C-terminal subunit</molecule>
    <text>The measured mass is that of the reduced and carbamidomethylated C-terminal chain.</text>
</comment>
<feature type="chain" id="PRO_0000245161" description="Lectin-1">
    <location>
        <begin position="1"/>
        <end position="90"/>
    </location>
</feature>
<feature type="chain" id="PRO_0000245162" description="Lectin-1 N-terminal subunit">
    <location>
        <begin position="1"/>
        <end position="50"/>
    </location>
</feature>
<feature type="chain" id="PRO_0000245163" description="Lectin-1 C-terminal subunit">
    <location>
        <begin position="51"/>
        <end position="90"/>
    </location>
</feature>
<feature type="modified residue" description="Pyrrolidone carboxylic acid" evidence="1">
    <location>
        <position position="1"/>
    </location>
</feature>
<feature type="disulfide bond" description="Interchain (between N-terminal and C-terminal subunits)" evidence="3">
    <location>
        <begin position="46"/>
        <end position="71"/>
    </location>
</feature>
<accession>P84871</accession>
<keyword id="KW-0903">Direct protein sequencing</keyword>
<keyword id="KW-1015">Disulfide bond</keyword>
<keyword id="KW-0348">Hemagglutinin</keyword>
<keyword id="KW-0430">Lectin</keyword>
<keyword id="KW-0873">Pyrrolidone carboxylic acid</keyword>
<protein>
    <recommendedName>
        <fullName>Lectin-1</fullName>
    </recommendedName>
    <alternativeName>
        <fullName>HCA</fullName>
    </alternativeName>
    <component>
        <recommendedName>
            <fullName>Lectin-1 N-terminal subunit</fullName>
        </recommendedName>
    </component>
    <component>
        <recommendedName>
            <fullName>Lectin-1 C-terminal subunit</fullName>
        </recommendedName>
    </component>
</protein>